<name>FBXL2_HUMAN</name>
<organism>
    <name type="scientific">Homo sapiens</name>
    <name type="common">Human</name>
    <dbReference type="NCBI Taxonomy" id="9606"/>
    <lineage>
        <taxon>Eukaryota</taxon>
        <taxon>Metazoa</taxon>
        <taxon>Chordata</taxon>
        <taxon>Craniata</taxon>
        <taxon>Vertebrata</taxon>
        <taxon>Euteleostomi</taxon>
        <taxon>Mammalia</taxon>
        <taxon>Eutheria</taxon>
        <taxon>Euarchontoglires</taxon>
        <taxon>Primates</taxon>
        <taxon>Haplorrhini</taxon>
        <taxon>Catarrhini</taxon>
        <taxon>Hominidae</taxon>
        <taxon>Homo</taxon>
    </lineage>
</organism>
<comment type="function">
    <text evidence="1 6 7 8 9">Calcium-activated substrate recognition component of the SCF (SKP1-cullin-F-box protein) E3 ubiquitin-protein ligase complex, SCF(FBXL2), which mediates the ubiquitination and subsequent proteasomal degradation of target proteins (PubMed:22020328, PubMed:22323446). Unlike many F-box proteins, FBXL2 does not seem to target phosphodegron within its substrates but rather calmodulin-binding motifs and is thereby antagonized by calmodulin (PubMed:22020328, PubMed:22323446). This is the case for the cyclins CCND2 and CCND3 which polyubiquitination and subsequent degradation are inhibited by calmodulin (PubMed:22020328, PubMed:22323446). Through CCND2 and CCND3 degradation induces cell-cycle arrest in G(0) (PubMed:22020328, PubMed:22323446). SCF(FBXL2) also mediates PIK3R2 ubiquitination and proteasomal degradation thereby regulating phosphatidylinositol 3-kinase signaling and autophagy (PubMed:23604317). PCYT1A monoubiquitination by SCF(FBXL2) and subsequent degradation regulates synthesis of phosphatidylcholine, which is utilized for formation of membranes and of pulmonary surfactant (By similarity). The SCF(FBXL2) complex acts as a regulator of inflammation by mediating ubiquitination and degradation of TRAF proteins (TRAF1, TRAF2, TRAF3, TRAF4, TRAF5 and TRAF6) (By similarity). The SCF(FBXL2) complex acts as a negative regulator of the NLRP3 inflammasome by mediating ubiquitination and degradation of NLRP3 (PubMed:26037928).</text>
</comment>
<comment type="pathway">
    <text evidence="9">Protein modification; protein ubiquitination.</text>
</comment>
<comment type="subunit">
    <text evidence="3 6 8">Part of the SCF (SKP1-CUL1-F-box) E3 ubiquitin-protein ligase complex SCF(FBXL2) composed of CUL1, SKP1, RBX1 and FBXL2 (PubMed:10531037). Interacts with calmodulin; may antagonize substrate ubiquitination by SCF(FBXL2) (PubMed:22020328). May interact with PIK3R1 (PubMed:23604317). Interacts with PTPN13 (PubMed:23604317).</text>
</comment>
<comment type="subunit">
    <text evidence="4">(Microbial infection) Interacts with hepatitis C virus non-structural protein 5A (NS5A) and less efficiently, with hepatitis C virus non-structural protein 5B (NS5B); a reaction crucial for hepatitis C virus RNA replication.</text>
</comment>
<comment type="interaction">
    <interactant intactId="EBI-724253">
        <id>Q9UKC9</id>
    </interactant>
    <interactant intactId="EBI-355710">
        <id>P48643</id>
        <label>CCT5</label>
    </interactant>
    <organismsDiffer>false</organismsDiffer>
    <experiments>3</experiments>
</comment>
<comment type="interaction">
    <interactant intactId="EBI-724253">
        <id>Q9UKC9</id>
    </interactant>
    <interactant intactId="EBI-352572">
        <id>P08238</id>
        <label>HSP90AB1</label>
    </interactant>
    <organismsDiffer>false</organismsDiffer>
    <experiments>2</experiments>
</comment>
<comment type="interaction">
    <interactant intactId="EBI-724253">
        <id>Q9UKC9</id>
    </interactant>
    <interactant intactId="EBI-307486">
        <id>P63208</id>
        <label>SKP1</label>
    </interactant>
    <organismsDiffer>false</organismsDiffer>
    <experiments>9</experiments>
</comment>
<comment type="subcellular location">
    <subcellularLocation>
        <location evidence="4">Membrane</location>
        <topology evidence="4">Lipid-anchor</topology>
    </subcellularLocation>
</comment>
<comment type="alternative products">
    <event type="alternative splicing"/>
    <isoform>
        <id>Q9UKC9-1</id>
        <name>1</name>
        <sequence type="displayed"/>
    </isoform>
    <isoform>
        <id>Q9UKC9-2</id>
        <name>2</name>
        <sequence type="described" ref="VSP_044600"/>
    </isoform>
</comment>
<comment type="tissue specificity">
    <text evidence="3">Expressed in brain, heart, kidney, liver, lung, pancreas and placenta.</text>
</comment>
<comment type="domain">
    <text evidence="4 14">The CAAX motif is a signal for the geranylgeranylation of FBXL2 and is required for its association with cell membranes and the recruitment of substrates to the active SCF(FBXL2) complex.</text>
</comment>
<comment type="PTM">
    <text evidence="1">Phosphorylated by GSK-beta (GSK3B), promoting recognition by FBXO3, leading to its ubiquitination by the SCF(FBXO3) complex.</text>
</comment>
<comment type="PTM">
    <text evidence="17">Ubiquitinated at Lys-201 by the SCF(FBXO3) complex in response to lipopolysaccharide (LPS), leading to its degradation by the proteasome.</text>
</comment>
<comment type="miscellaneous">
    <text evidence="4">Deletion of the F-box domain creates a dominant-negative protein that inhibits replication of hepatitis C virus RNA when overexpressed in a hepatoma cell line; this inhibition could be overcome by NS5A coexpression.</text>
</comment>
<comment type="sequence caution" evidence="15">
    <conflict type="erroneous initiation">
        <sequence resource="EMBL-CDS" id="AAF03128"/>
    </conflict>
    <text>Extended N-terminus.</text>
</comment>
<gene>
    <name evidence="13 18" type="primary">FBXL2</name>
    <name evidence="10" type="synonym">FBL2</name>
    <name evidence="11" type="synonym">FBL3</name>
</gene>
<evidence type="ECO:0000250" key="1">
    <source>
        <dbReference type="UniProtKB" id="Q8BH16"/>
    </source>
</evidence>
<evidence type="ECO:0000255" key="2">
    <source>
        <dbReference type="PROSITE-ProRule" id="PRU00080"/>
    </source>
</evidence>
<evidence type="ECO:0000269" key="3">
    <source>
    </source>
</evidence>
<evidence type="ECO:0000269" key="4">
    <source>
    </source>
</evidence>
<evidence type="ECO:0000269" key="5">
    <source>
    </source>
</evidence>
<evidence type="ECO:0000269" key="6">
    <source>
    </source>
</evidence>
<evidence type="ECO:0000269" key="7">
    <source>
    </source>
</evidence>
<evidence type="ECO:0000269" key="8">
    <source>
    </source>
</evidence>
<evidence type="ECO:0000269" key="9">
    <source>
    </source>
</evidence>
<evidence type="ECO:0000303" key="10">
    <source>
    </source>
</evidence>
<evidence type="ECO:0000303" key="11">
    <source>
    </source>
</evidence>
<evidence type="ECO:0000303" key="12">
    <source>
    </source>
</evidence>
<evidence type="ECO:0000303" key="13">
    <source>
    </source>
</evidence>
<evidence type="ECO:0000303" key="14">
    <source>
    </source>
</evidence>
<evidence type="ECO:0000305" key="15"/>
<evidence type="ECO:0000305" key="16">
    <source>
    </source>
</evidence>
<evidence type="ECO:0000305" key="17">
    <source>
    </source>
</evidence>
<evidence type="ECO:0000312" key="18">
    <source>
        <dbReference type="HGNC" id="HGNC:13598"/>
    </source>
</evidence>
<evidence type="ECO:0007829" key="19">
    <source>
        <dbReference type="PDB" id="6O60"/>
    </source>
</evidence>
<reference key="1">
    <citation type="journal article" date="1999" name="Curr. Biol.">
        <title>Identification of a family of human F-box proteins.</title>
        <authorList>
            <person name="Cenciarelli C."/>
            <person name="Chiaur D.S."/>
            <person name="Guardavaccaro D."/>
            <person name="Parks W."/>
            <person name="Vidal M."/>
            <person name="Pagano M."/>
        </authorList>
    </citation>
    <scope>NUCLEOTIDE SEQUENCE [MRNA] (ISOFORM 1)</scope>
</reference>
<reference key="2">
    <citation type="journal article" date="1999" name="Curr. Biol.">
        <title>A family of mammalian F-box proteins.</title>
        <authorList>
            <person name="Winston J.T."/>
            <person name="Koepp D.M."/>
            <person name="Zhu C."/>
            <person name="Elledge S.J."/>
            <person name="Harper J.W."/>
        </authorList>
    </citation>
    <scope>NUCLEOTIDE SEQUENCE [MRNA] (ISOFORM 1)</scope>
    <scope>INTERACTION WITH SKP1</scope>
    <scope>TISSUE SPECIFICITY</scope>
</reference>
<reference key="3">
    <citation type="journal article" date="2000" name="Genomics">
        <title>cDNA cloning and expression analysis of new members of the mammalian F-box protein family.</title>
        <authorList>
            <person name="Ilyin G.P."/>
            <person name="Rialland M."/>
            <person name="Pigeon C."/>
            <person name="Guguen-Guillouzo C."/>
        </authorList>
    </citation>
    <scope>NUCLEOTIDE SEQUENCE [MRNA] (ISOFORM 1)</scope>
</reference>
<reference key="4">
    <citation type="journal article" date="2004" name="Nat. Genet.">
        <title>Complete sequencing and characterization of 21,243 full-length human cDNAs.</title>
        <authorList>
            <person name="Ota T."/>
            <person name="Suzuki Y."/>
            <person name="Nishikawa T."/>
            <person name="Otsuki T."/>
            <person name="Sugiyama T."/>
            <person name="Irie R."/>
            <person name="Wakamatsu A."/>
            <person name="Hayashi K."/>
            <person name="Sato H."/>
            <person name="Nagai K."/>
            <person name="Kimura K."/>
            <person name="Makita H."/>
            <person name="Sekine M."/>
            <person name="Obayashi M."/>
            <person name="Nishi T."/>
            <person name="Shibahara T."/>
            <person name="Tanaka T."/>
            <person name="Ishii S."/>
            <person name="Yamamoto J."/>
            <person name="Saito K."/>
            <person name="Kawai Y."/>
            <person name="Isono Y."/>
            <person name="Nakamura Y."/>
            <person name="Nagahari K."/>
            <person name="Murakami K."/>
            <person name="Yasuda T."/>
            <person name="Iwayanagi T."/>
            <person name="Wagatsuma M."/>
            <person name="Shiratori A."/>
            <person name="Sudo H."/>
            <person name="Hosoiri T."/>
            <person name="Kaku Y."/>
            <person name="Kodaira H."/>
            <person name="Kondo H."/>
            <person name="Sugawara M."/>
            <person name="Takahashi M."/>
            <person name="Kanda K."/>
            <person name="Yokoi T."/>
            <person name="Furuya T."/>
            <person name="Kikkawa E."/>
            <person name="Omura Y."/>
            <person name="Abe K."/>
            <person name="Kamihara K."/>
            <person name="Katsuta N."/>
            <person name="Sato K."/>
            <person name="Tanikawa M."/>
            <person name="Yamazaki M."/>
            <person name="Ninomiya K."/>
            <person name="Ishibashi T."/>
            <person name="Yamashita H."/>
            <person name="Murakawa K."/>
            <person name="Fujimori K."/>
            <person name="Tanai H."/>
            <person name="Kimata M."/>
            <person name="Watanabe M."/>
            <person name="Hiraoka S."/>
            <person name="Chiba Y."/>
            <person name="Ishida S."/>
            <person name="Ono Y."/>
            <person name="Takiguchi S."/>
            <person name="Watanabe S."/>
            <person name="Yosida M."/>
            <person name="Hotuta T."/>
            <person name="Kusano J."/>
            <person name="Kanehori K."/>
            <person name="Takahashi-Fujii A."/>
            <person name="Hara H."/>
            <person name="Tanase T.-O."/>
            <person name="Nomura Y."/>
            <person name="Togiya S."/>
            <person name="Komai F."/>
            <person name="Hara R."/>
            <person name="Takeuchi K."/>
            <person name="Arita M."/>
            <person name="Imose N."/>
            <person name="Musashino K."/>
            <person name="Yuuki H."/>
            <person name="Oshima A."/>
            <person name="Sasaki N."/>
            <person name="Aotsuka S."/>
            <person name="Yoshikawa Y."/>
            <person name="Matsunawa H."/>
            <person name="Ichihara T."/>
            <person name="Shiohata N."/>
            <person name="Sano S."/>
            <person name="Moriya S."/>
            <person name="Momiyama H."/>
            <person name="Satoh N."/>
            <person name="Takami S."/>
            <person name="Terashima Y."/>
            <person name="Suzuki O."/>
            <person name="Nakagawa S."/>
            <person name="Senoh A."/>
            <person name="Mizoguchi H."/>
            <person name="Goto Y."/>
            <person name="Shimizu F."/>
            <person name="Wakebe H."/>
            <person name="Hishigaki H."/>
            <person name="Watanabe T."/>
            <person name="Sugiyama A."/>
            <person name="Takemoto M."/>
            <person name="Kawakami B."/>
            <person name="Yamazaki M."/>
            <person name="Watanabe K."/>
            <person name="Kumagai A."/>
            <person name="Itakura S."/>
            <person name="Fukuzumi Y."/>
            <person name="Fujimori Y."/>
            <person name="Komiyama M."/>
            <person name="Tashiro H."/>
            <person name="Tanigami A."/>
            <person name="Fujiwara T."/>
            <person name="Ono T."/>
            <person name="Yamada K."/>
            <person name="Fujii Y."/>
            <person name="Ozaki K."/>
            <person name="Hirao M."/>
            <person name="Ohmori Y."/>
            <person name="Kawabata A."/>
            <person name="Hikiji T."/>
            <person name="Kobatake N."/>
            <person name="Inagaki H."/>
            <person name="Ikema Y."/>
            <person name="Okamoto S."/>
            <person name="Okitani R."/>
            <person name="Kawakami T."/>
            <person name="Noguchi S."/>
            <person name="Itoh T."/>
            <person name="Shigeta K."/>
            <person name="Senba T."/>
            <person name="Matsumura K."/>
            <person name="Nakajima Y."/>
            <person name="Mizuno T."/>
            <person name="Morinaga M."/>
            <person name="Sasaki M."/>
            <person name="Togashi T."/>
            <person name="Oyama M."/>
            <person name="Hata H."/>
            <person name="Watanabe M."/>
            <person name="Komatsu T."/>
            <person name="Mizushima-Sugano J."/>
            <person name="Satoh T."/>
            <person name="Shirai Y."/>
            <person name="Takahashi Y."/>
            <person name="Nakagawa K."/>
            <person name="Okumura K."/>
            <person name="Nagase T."/>
            <person name="Nomura N."/>
            <person name="Kikuchi H."/>
            <person name="Masuho Y."/>
            <person name="Yamashita R."/>
            <person name="Nakai K."/>
            <person name="Yada T."/>
            <person name="Nakamura Y."/>
            <person name="Ohara O."/>
            <person name="Isogai T."/>
            <person name="Sugano S."/>
        </authorList>
    </citation>
    <scope>NUCLEOTIDE SEQUENCE [LARGE SCALE MRNA] (ISOFORMS 1 AND 2)</scope>
</reference>
<reference key="5">
    <citation type="submission" date="2004-06" db="EMBL/GenBank/DDBJ databases">
        <title>Cloning of human full open reading frames in Gateway(TM) system entry vector (pDONR201).</title>
        <authorList>
            <person name="Ebert L."/>
            <person name="Schick M."/>
            <person name="Neubert P."/>
            <person name="Schatten R."/>
            <person name="Henze S."/>
            <person name="Korn B."/>
        </authorList>
    </citation>
    <scope>NUCLEOTIDE SEQUENCE [LARGE SCALE MRNA] (ISOFORM 1)</scope>
</reference>
<reference key="6">
    <citation type="journal article" date="2006" name="Nature">
        <title>The DNA sequence, annotation and analysis of human chromosome 3.</title>
        <authorList>
            <person name="Muzny D.M."/>
            <person name="Scherer S.E."/>
            <person name="Kaul R."/>
            <person name="Wang J."/>
            <person name="Yu J."/>
            <person name="Sudbrak R."/>
            <person name="Buhay C.J."/>
            <person name="Chen R."/>
            <person name="Cree A."/>
            <person name="Ding Y."/>
            <person name="Dugan-Rocha S."/>
            <person name="Gill R."/>
            <person name="Gunaratne P."/>
            <person name="Harris R.A."/>
            <person name="Hawes A.C."/>
            <person name="Hernandez J."/>
            <person name="Hodgson A.V."/>
            <person name="Hume J."/>
            <person name="Jackson A."/>
            <person name="Khan Z.M."/>
            <person name="Kovar-Smith C."/>
            <person name="Lewis L.R."/>
            <person name="Lozado R.J."/>
            <person name="Metzker M.L."/>
            <person name="Milosavljevic A."/>
            <person name="Miner G.R."/>
            <person name="Morgan M.B."/>
            <person name="Nazareth L.V."/>
            <person name="Scott G."/>
            <person name="Sodergren E."/>
            <person name="Song X.-Z."/>
            <person name="Steffen D."/>
            <person name="Wei S."/>
            <person name="Wheeler D.A."/>
            <person name="Wright M.W."/>
            <person name="Worley K.C."/>
            <person name="Yuan Y."/>
            <person name="Zhang Z."/>
            <person name="Adams C.Q."/>
            <person name="Ansari-Lari M.A."/>
            <person name="Ayele M."/>
            <person name="Brown M.J."/>
            <person name="Chen G."/>
            <person name="Chen Z."/>
            <person name="Clendenning J."/>
            <person name="Clerc-Blankenburg K.P."/>
            <person name="Chen R."/>
            <person name="Chen Z."/>
            <person name="Davis C."/>
            <person name="Delgado O."/>
            <person name="Dinh H.H."/>
            <person name="Dong W."/>
            <person name="Draper H."/>
            <person name="Ernst S."/>
            <person name="Fu G."/>
            <person name="Gonzalez-Garay M.L."/>
            <person name="Garcia D.K."/>
            <person name="Gillett W."/>
            <person name="Gu J."/>
            <person name="Hao B."/>
            <person name="Haugen E."/>
            <person name="Havlak P."/>
            <person name="He X."/>
            <person name="Hennig S."/>
            <person name="Hu S."/>
            <person name="Huang W."/>
            <person name="Jackson L.R."/>
            <person name="Jacob L.S."/>
            <person name="Kelly S.H."/>
            <person name="Kube M."/>
            <person name="Levy R."/>
            <person name="Li Z."/>
            <person name="Liu B."/>
            <person name="Liu J."/>
            <person name="Liu W."/>
            <person name="Lu J."/>
            <person name="Maheshwari M."/>
            <person name="Nguyen B.-V."/>
            <person name="Okwuonu G.O."/>
            <person name="Palmeiri A."/>
            <person name="Pasternak S."/>
            <person name="Perez L.M."/>
            <person name="Phelps K.A."/>
            <person name="Plopper F.J."/>
            <person name="Qiang B."/>
            <person name="Raymond C."/>
            <person name="Rodriguez R."/>
            <person name="Saenphimmachak C."/>
            <person name="Santibanez J."/>
            <person name="Shen H."/>
            <person name="Shen Y."/>
            <person name="Subramanian S."/>
            <person name="Tabor P.E."/>
            <person name="Verduzco D."/>
            <person name="Waldron L."/>
            <person name="Wang J."/>
            <person name="Wang J."/>
            <person name="Wang Q."/>
            <person name="Williams G.A."/>
            <person name="Wong G.K.-S."/>
            <person name="Yao Z."/>
            <person name="Zhang J."/>
            <person name="Zhang X."/>
            <person name="Zhao G."/>
            <person name="Zhou J."/>
            <person name="Zhou Y."/>
            <person name="Nelson D."/>
            <person name="Lehrach H."/>
            <person name="Reinhardt R."/>
            <person name="Naylor S.L."/>
            <person name="Yang H."/>
            <person name="Olson M."/>
            <person name="Weinstock G."/>
            <person name="Gibbs R.A."/>
        </authorList>
    </citation>
    <scope>NUCLEOTIDE SEQUENCE [LARGE SCALE GENOMIC DNA]</scope>
</reference>
<reference key="7">
    <citation type="journal article" date="2004" name="Genome Res.">
        <title>The status, quality, and expansion of the NIH full-length cDNA project: the Mammalian Gene Collection (MGC).</title>
        <authorList>
            <consortium name="The MGC Project Team"/>
        </authorList>
    </citation>
    <scope>NUCLEOTIDE SEQUENCE [LARGE SCALE MRNA] (ISOFORM 1)</scope>
    <source>
        <tissue>Brain</tissue>
    </source>
</reference>
<reference key="8">
    <citation type="journal article" date="2007" name="BMC Genomics">
        <title>The full-ORF clone resource of the German cDNA consortium.</title>
        <authorList>
            <person name="Bechtel S."/>
            <person name="Rosenfelder H."/>
            <person name="Duda A."/>
            <person name="Schmidt C.P."/>
            <person name="Ernst U."/>
            <person name="Wellenreuther R."/>
            <person name="Mehrle A."/>
            <person name="Schuster C."/>
            <person name="Bahr A."/>
            <person name="Bloecker H."/>
            <person name="Heubner D."/>
            <person name="Hoerlein A."/>
            <person name="Michel G."/>
            <person name="Wedler H."/>
            <person name="Koehrer K."/>
            <person name="Ottenwaelder B."/>
            <person name="Poustka A."/>
            <person name="Wiemann S."/>
            <person name="Schupp I."/>
        </authorList>
    </citation>
    <scope>NUCLEOTIDE SEQUENCE [LARGE SCALE MRNA] OF 174-423 (ISOFORM 1)</scope>
    <source>
        <tissue>Brain</tissue>
    </source>
</reference>
<reference key="9">
    <citation type="journal article" date="2005" name="Mol. Cell">
        <title>Identification of FBL2 as a geranylgeranylated cellular protein required for hepatitis C virus RNA replication.</title>
        <authorList>
            <person name="Wang C."/>
            <person name="Gale M. Jr."/>
            <person name="Keller B.C."/>
            <person name="Huang H."/>
            <person name="Brown M.S."/>
            <person name="Goldstein J.L."/>
            <person name="Ye J."/>
        </authorList>
    </citation>
    <scope>INTERACTION WITH HEPATITIS C VIRUS NS5A AND NS5B (MICROBIAL INFECTION)</scope>
    <scope>ISOPRENYLATION AT CYS-420</scope>
    <scope>MUTAGENESIS OF CYS-420</scope>
    <scope>SUBCELLULAR LOCATION</scope>
    <scope>DOMAIN</scope>
</reference>
<reference key="10">
    <citation type="journal article" date="2012" name="Blood">
        <title>F-box protein FBXL2 targets cyclin D2 for ubiquitination and degradation to inhibit leukemic cell proliferation.</title>
        <authorList>
            <person name="Chen B.B."/>
            <person name="Glasser J.R."/>
            <person name="Coon T.A."/>
            <person name="Zou C."/>
            <person name="Miller H.L."/>
            <person name="Fenton M."/>
            <person name="McDyer J.F."/>
            <person name="Boyiadzis M."/>
            <person name="Mallampalli R.K."/>
        </authorList>
    </citation>
    <scope>FUNCTION</scope>
</reference>
<reference key="11">
    <citation type="journal article" date="2012" name="Oncogene">
        <title>F-box protein FBXL2 exerts human lung tumor suppressor-like activity by ubiquitin-mediated degradation of cyclin D3 resulting in cell cycle arrest.</title>
        <authorList>
            <person name="Chen B.B."/>
            <person name="Glasser J.R."/>
            <person name="Coon T.A."/>
            <person name="Mallampalli R.K."/>
        </authorList>
    </citation>
    <scope>FUNCTION</scope>
    <scope>INTERACTION WITH CALMODULIN</scope>
</reference>
<reference key="12">
    <citation type="journal article" date="2013" name="Nat. Cell Biol.">
        <title>FBXL2- and PTPL1-mediated degradation of p110-free p85beta regulatory subunit controls the PI(3)K signalling cascade.</title>
        <authorList>
            <person name="Kuchay S."/>
            <person name="Duan S."/>
            <person name="Schenkein E."/>
            <person name="Peschiaroli A."/>
            <person name="Saraf A."/>
            <person name="Florens L."/>
            <person name="Washburn M.P."/>
            <person name="Pagano M."/>
        </authorList>
    </citation>
    <scope>FUNCTION</scope>
    <scope>IDENTIFICATION AS PART OF AN SCF COMPLEX</scope>
    <scope>INTERACTION WITH PIK3R1 AND PTPN13</scope>
    <scope>MUTAGENESIS OF CYS-420</scope>
    <scope>DOMAIN</scope>
</reference>
<reference key="13">
    <citation type="journal article" date="2015" name="J. Biol. Chem.">
        <title>Lipopolysaccharide primes the NALP3 inflammasome by inhibiting its ubiquitination and degradation mediated by the SCFFBXL2 E3 ligase.</title>
        <authorList>
            <person name="Han S."/>
            <person name="Lear T.B."/>
            <person name="Jerome J.A."/>
            <person name="Rajbhandari S."/>
            <person name="Snavely C.A."/>
            <person name="Gulick D.L."/>
            <person name="Gibson K.F."/>
            <person name="Zou C."/>
            <person name="Chen B.B."/>
            <person name="Mallampalli R.K."/>
        </authorList>
    </citation>
    <scope>FUNCTION</scope>
    <scope>PATHWAY</scope>
    <scope>UBIQUITINATION</scope>
</reference>
<reference key="14">
    <citation type="journal article" date="2006" name="Science">
        <title>The consensus coding sequences of human breast and colorectal cancers.</title>
        <authorList>
            <person name="Sjoeblom T."/>
            <person name="Jones S."/>
            <person name="Wood L.D."/>
            <person name="Parsons D.W."/>
            <person name="Lin J."/>
            <person name="Barber T.D."/>
            <person name="Mandelker D."/>
            <person name="Leary R.J."/>
            <person name="Ptak J."/>
            <person name="Silliman N."/>
            <person name="Szabo S."/>
            <person name="Buckhaults P."/>
            <person name="Farrell C."/>
            <person name="Meeh P."/>
            <person name="Markowitz S.D."/>
            <person name="Willis J."/>
            <person name="Dawson D."/>
            <person name="Willson J.K.V."/>
            <person name="Gazdar A.F."/>
            <person name="Hartigan J."/>
            <person name="Wu L."/>
            <person name="Liu C."/>
            <person name="Parmigiani G."/>
            <person name="Park B.H."/>
            <person name="Bachman K.E."/>
            <person name="Papadopoulos N."/>
            <person name="Vogelstein B."/>
            <person name="Kinzler K.W."/>
            <person name="Velculescu V.E."/>
        </authorList>
    </citation>
    <scope>VARIANT [LARGE SCALE ANALYSIS] MET-226</scope>
</reference>
<protein>
    <recommendedName>
        <fullName evidence="15">F-box/LRR-repeat protein 2</fullName>
    </recommendedName>
    <alternativeName>
        <fullName evidence="13">F-box and leucine-rich repeat protein 2</fullName>
    </alternativeName>
    <alternativeName>
        <fullName evidence="11">F-box protein FBL2/FBL3</fullName>
    </alternativeName>
</protein>
<keyword id="KW-0002">3D-structure</keyword>
<keyword id="KW-0025">Alternative splicing</keyword>
<keyword id="KW-0106">Calcium</keyword>
<keyword id="KW-0112">Calmodulin-binding</keyword>
<keyword id="KW-0945">Host-virus interaction</keyword>
<keyword id="KW-1017">Isopeptide bond</keyword>
<keyword id="KW-0433">Leucine-rich repeat</keyword>
<keyword id="KW-0449">Lipoprotein</keyword>
<keyword id="KW-0472">Membrane</keyword>
<keyword id="KW-0597">Phosphoprotein</keyword>
<keyword id="KW-0636">Prenylation</keyword>
<keyword id="KW-1267">Proteomics identification</keyword>
<keyword id="KW-1185">Reference proteome</keyword>
<keyword id="KW-0677">Repeat</keyword>
<keyword id="KW-0832">Ubl conjugation</keyword>
<keyword id="KW-0833">Ubl conjugation pathway</keyword>
<proteinExistence type="evidence at protein level"/>
<feature type="chain" id="PRO_0000119840" description="F-box/LRR-repeat protein 2">
    <location>
        <begin position="1"/>
        <end position="423"/>
    </location>
</feature>
<feature type="domain" description="F-box" evidence="2">
    <location>
        <begin position="9"/>
        <end position="55"/>
    </location>
</feature>
<feature type="repeat" description="LRR 1">
    <location>
        <begin position="61"/>
        <end position="87"/>
    </location>
</feature>
<feature type="repeat" description="LRR 2">
    <location>
        <begin position="88"/>
        <end position="113"/>
    </location>
</feature>
<feature type="repeat" description="LRR 3">
    <location>
        <begin position="114"/>
        <end position="139"/>
    </location>
</feature>
<feature type="repeat" description="LRR 4">
    <location>
        <begin position="140"/>
        <end position="165"/>
    </location>
</feature>
<feature type="repeat" description="LRR 5">
    <location>
        <begin position="166"/>
        <end position="191"/>
    </location>
</feature>
<feature type="repeat" description="LRR 6">
    <location>
        <begin position="192"/>
        <end position="217"/>
    </location>
</feature>
<feature type="repeat" description="LRR 7">
    <location>
        <begin position="218"/>
        <end position="243"/>
    </location>
</feature>
<feature type="repeat" description="LRR 8">
    <location>
        <begin position="244"/>
        <end position="269"/>
    </location>
</feature>
<feature type="repeat" description="LRR 9">
    <location>
        <begin position="270"/>
        <end position="295"/>
    </location>
</feature>
<feature type="repeat" description="LRR 10">
    <location>
        <begin position="296"/>
        <end position="321"/>
    </location>
</feature>
<feature type="repeat" description="LRR 11">
    <location>
        <begin position="322"/>
        <end position="350"/>
    </location>
</feature>
<feature type="repeat" description="LRR 12">
    <location>
        <begin position="351"/>
        <end position="375"/>
    </location>
</feature>
<feature type="repeat" description="LRR 13">
    <location>
        <begin position="376"/>
        <end position="401"/>
    </location>
</feature>
<feature type="region of interest" description="Interaction with Calmodulin" evidence="1">
    <location>
        <begin position="80"/>
        <end position="90"/>
    </location>
</feature>
<feature type="short sequence motif" description="CAAX motif">
    <location>
        <begin position="420"/>
        <end position="423"/>
    </location>
</feature>
<feature type="modified residue" description="Phosphothreonine" evidence="1">
    <location>
        <position position="404"/>
    </location>
</feature>
<feature type="lipid moiety-binding region" description="S-geranylgeranyl cysteine" evidence="16">
    <location>
        <position position="420"/>
    </location>
</feature>
<feature type="cross-link" description="Glycyl lysine isopeptide (Lys-Gly) (interchain with G-Cter in ubiquitin)" evidence="1">
    <location>
        <position position="201"/>
    </location>
</feature>
<feature type="splice variant" id="VSP_044600" description="In isoform 2." evidence="12">
    <location>
        <begin position="132"/>
        <end position="199"/>
    </location>
</feature>
<feature type="sequence variant" id="VAR_036071" description="In a colorectal cancer sample; somatic mutation." evidence="5">
    <original>V</original>
    <variation>M</variation>
    <location>
        <position position="226"/>
    </location>
</feature>
<feature type="mutagenesis site" description="Loss of geranylgeranylation and association to membranes. Loss of interaction with NS5A, PIK3R1 and PIK3R2. No effect on interaction with PTPN13." evidence="4 8">
    <original>C</original>
    <variation>S</variation>
    <location>
        <position position="420"/>
    </location>
</feature>
<feature type="sequence conflict" description="In Ref. 1; AAF04510, 2; AAF03128 and 5; CAG33402." evidence="15" ref="1 2 5">
    <original>T</original>
    <variation>I</variation>
    <location>
        <position position="62"/>
    </location>
</feature>
<feature type="sequence conflict" description="In Ref. 1; AAF04510." evidence="15" ref="1">
    <original>G</original>
    <variation>V</variation>
    <location>
        <position position="77"/>
    </location>
</feature>
<feature type="sequence conflict" description="In Ref. 4; BAA91691." evidence="15" ref="4">
    <original>R</original>
    <variation>K</variation>
    <location>
        <position position="81"/>
    </location>
</feature>
<feature type="sequence conflict" description="In Ref. 4; BAG61062." evidence="15" ref="4">
    <original>H</original>
    <variation>Q</variation>
    <location>
        <position position="108"/>
    </location>
</feature>
<feature type="sequence conflict" description="In Ref. 8; CAB43222." evidence="15" ref="8">
    <original>I</original>
    <variation>W</variation>
    <location>
        <position position="174"/>
    </location>
</feature>
<feature type="sequence conflict" description="In Ref. 8; CAB43222." evidence="15" ref="8">
    <original>S</original>
    <variation>P</variation>
    <location>
        <position position="320"/>
    </location>
</feature>
<feature type="sequence conflict" description="In Ref. 5; CAG33402." evidence="15" ref="5">
    <original>R</original>
    <variation>G</variation>
    <location>
        <position position="342"/>
    </location>
</feature>
<feature type="helix" evidence="19">
    <location>
        <begin position="10"/>
        <end position="14"/>
    </location>
</feature>
<feature type="helix" evidence="19">
    <location>
        <begin position="17"/>
        <end position="24"/>
    </location>
</feature>
<feature type="helix" evidence="19">
    <location>
        <begin position="29"/>
        <end position="35"/>
    </location>
</feature>
<feature type="turn" evidence="19">
    <location>
        <begin position="36"/>
        <end position="38"/>
    </location>
</feature>
<feature type="helix" evidence="19">
    <location>
        <begin position="40"/>
        <end position="46"/>
    </location>
</feature>
<feature type="helix" evidence="19">
    <location>
        <begin position="49"/>
        <end position="51"/>
    </location>
</feature>
<feature type="strand" evidence="19">
    <location>
        <begin position="53"/>
        <end position="56"/>
    </location>
</feature>
<feature type="helix" evidence="19">
    <location>
        <begin position="67"/>
        <end position="75"/>
    </location>
</feature>
<feature type="strand" evidence="19">
    <location>
        <begin position="82"/>
        <end position="84"/>
    </location>
</feature>
<feature type="helix" evidence="19">
    <location>
        <begin position="93"/>
        <end position="102"/>
    </location>
</feature>
<feature type="strand" evidence="19">
    <location>
        <begin position="108"/>
        <end position="110"/>
    </location>
</feature>
<feature type="helix" evidence="19">
    <location>
        <begin position="119"/>
        <end position="128"/>
    </location>
</feature>
<feature type="strand" evidence="19">
    <location>
        <begin position="134"/>
        <end position="136"/>
    </location>
</feature>
<feature type="helix" evidence="19">
    <location>
        <begin position="145"/>
        <end position="154"/>
    </location>
</feature>
<feature type="strand" evidence="19">
    <location>
        <begin position="160"/>
        <end position="162"/>
    </location>
</feature>
<feature type="helix" evidence="19">
    <location>
        <begin position="171"/>
        <end position="180"/>
    </location>
</feature>
<feature type="strand" evidence="19">
    <location>
        <begin position="185"/>
        <end position="188"/>
    </location>
</feature>
<feature type="helix" evidence="19">
    <location>
        <begin position="197"/>
        <end position="206"/>
    </location>
</feature>
<feature type="strand" evidence="19">
    <location>
        <begin position="212"/>
        <end position="214"/>
    </location>
</feature>
<feature type="helix" evidence="19">
    <location>
        <begin position="223"/>
        <end position="232"/>
    </location>
</feature>
<feature type="strand" evidence="19">
    <location>
        <begin position="238"/>
        <end position="240"/>
    </location>
</feature>
<feature type="helix" evidence="19">
    <location>
        <begin position="249"/>
        <end position="258"/>
    </location>
</feature>
<feature type="strand" evidence="19">
    <location>
        <begin position="264"/>
        <end position="266"/>
    </location>
</feature>
<feature type="helix" evidence="19">
    <location>
        <begin position="275"/>
        <end position="284"/>
    </location>
</feature>
<feature type="strand" evidence="19">
    <location>
        <begin position="290"/>
        <end position="292"/>
    </location>
</feature>
<feature type="helix" evidence="19">
    <location>
        <begin position="301"/>
        <end position="310"/>
    </location>
</feature>
<feature type="strand" evidence="19">
    <location>
        <begin position="316"/>
        <end position="318"/>
    </location>
</feature>
<feature type="helix" evidence="19">
    <location>
        <begin position="327"/>
        <end position="334"/>
    </location>
</feature>
<feature type="helix" evidence="19">
    <location>
        <begin position="337"/>
        <end position="341"/>
    </location>
</feature>
<feature type="strand" evidence="19">
    <location>
        <begin position="345"/>
        <end position="347"/>
    </location>
</feature>
<feature type="helix" evidence="19">
    <location>
        <begin position="356"/>
        <end position="361"/>
    </location>
</feature>
<feature type="strand" evidence="19">
    <location>
        <begin position="370"/>
        <end position="372"/>
    </location>
</feature>
<feature type="helix" evidence="19">
    <location>
        <begin position="381"/>
        <end position="390"/>
    </location>
</feature>
<feature type="strand" evidence="19">
    <location>
        <begin position="395"/>
        <end position="397"/>
    </location>
</feature>
<dbReference type="EMBL" id="AF174589">
    <property type="protein sequence ID" value="AAF04510.1"/>
    <property type="molecule type" value="mRNA"/>
</dbReference>
<dbReference type="EMBL" id="AF176518">
    <property type="protein sequence ID" value="AAF03128.1"/>
    <property type="status" value="ALT_INIT"/>
    <property type="molecule type" value="mRNA"/>
</dbReference>
<dbReference type="EMBL" id="AF186273">
    <property type="protein sequence ID" value="AAD56248.1"/>
    <property type="molecule type" value="mRNA"/>
</dbReference>
<dbReference type="EMBL" id="AK001438">
    <property type="protein sequence ID" value="BAA91691.1"/>
    <property type="molecule type" value="mRNA"/>
</dbReference>
<dbReference type="EMBL" id="AK298967">
    <property type="protein sequence ID" value="BAG61062.1"/>
    <property type="molecule type" value="mRNA"/>
</dbReference>
<dbReference type="EMBL" id="CR457121">
    <property type="protein sequence ID" value="CAG33402.1"/>
    <property type="molecule type" value="mRNA"/>
</dbReference>
<dbReference type="EMBL" id="AC122176">
    <property type="status" value="NOT_ANNOTATED_CDS"/>
    <property type="molecule type" value="Genomic_DNA"/>
</dbReference>
<dbReference type="EMBL" id="AC123900">
    <property type="status" value="NOT_ANNOTATED_CDS"/>
    <property type="molecule type" value="Genomic_DNA"/>
</dbReference>
<dbReference type="EMBL" id="BC031556">
    <property type="protein sequence ID" value="AAH31556.1"/>
    <property type="molecule type" value="mRNA"/>
</dbReference>
<dbReference type="EMBL" id="AL049953">
    <property type="protein sequence ID" value="CAB43222.1"/>
    <property type="molecule type" value="mRNA"/>
</dbReference>
<dbReference type="CCDS" id="CCDS2658.1">
    <molecule id="Q9UKC9-1"/>
</dbReference>
<dbReference type="PIR" id="T08680">
    <property type="entry name" value="T08680"/>
</dbReference>
<dbReference type="RefSeq" id="NP_001165184.1">
    <property type="nucleotide sequence ID" value="NM_001171713.1"/>
</dbReference>
<dbReference type="RefSeq" id="NP_036289.3">
    <molecule id="Q9UKC9-1"/>
    <property type="nucleotide sequence ID" value="NM_012157.3"/>
</dbReference>
<dbReference type="PDB" id="6O60">
    <property type="method" value="X-ray"/>
    <property type="resolution" value="2.50 A"/>
    <property type="chains" value="C=1-423"/>
</dbReference>
<dbReference type="PDBsum" id="6O60"/>
<dbReference type="SMR" id="Q9UKC9"/>
<dbReference type="BioGRID" id="117355">
    <property type="interactions" value="34"/>
</dbReference>
<dbReference type="ComplexPortal" id="CPX-3292">
    <property type="entry name" value="SCF E3 ubiquitin ligase complex, FBXL2 variant"/>
</dbReference>
<dbReference type="CORUM" id="Q9UKC9"/>
<dbReference type="FunCoup" id="Q9UKC9">
    <property type="interactions" value="159"/>
</dbReference>
<dbReference type="IntAct" id="Q9UKC9">
    <property type="interactions" value="13"/>
</dbReference>
<dbReference type="MINT" id="Q9UKC9"/>
<dbReference type="STRING" id="9606.ENSP00000417601"/>
<dbReference type="GlyGen" id="Q9UKC9">
    <property type="glycosylation" value="3 sites, 1 N-linked glycan (1 site), 1 O-linked glycan (1 site)"/>
</dbReference>
<dbReference type="iPTMnet" id="Q9UKC9"/>
<dbReference type="PhosphoSitePlus" id="Q9UKC9"/>
<dbReference type="BioMuta" id="FBXL2"/>
<dbReference type="DMDM" id="145559475"/>
<dbReference type="jPOST" id="Q9UKC9"/>
<dbReference type="MassIVE" id="Q9UKC9"/>
<dbReference type="PaxDb" id="9606-ENSP00000417601"/>
<dbReference type="PeptideAtlas" id="Q9UKC9"/>
<dbReference type="ProteomicsDB" id="19556"/>
<dbReference type="ProteomicsDB" id="84766">
    <molecule id="Q9UKC9-1"/>
</dbReference>
<dbReference type="Pumba" id="Q9UKC9"/>
<dbReference type="Antibodypedia" id="27896">
    <property type="antibodies" value="173 antibodies from 27 providers"/>
</dbReference>
<dbReference type="DNASU" id="25827"/>
<dbReference type="Ensembl" id="ENST00000484457.6">
    <molecule id="Q9UKC9-1"/>
    <property type="protein sequence ID" value="ENSP00000417601.1"/>
    <property type="gene ID" value="ENSG00000153558.17"/>
</dbReference>
<dbReference type="GeneID" id="25827"/>
<dbReference type="KEGG" id="hsa:25827"/>
<dbReference type="MANE-Select" id="ENST00000484457.6">
    <property type="protein sequence ID" value="ENSP00000417601.1"/>
    <property type="RefSeq nucleotide sequence ID" value="NM_012157.5"/>
    <property type="RefSeq protein sequence ID" value="NP_036289.3"/>
</dbReference>
<dbReference type="UCSC" id="uc003cfp.4">
    <molecule id="Q9UKC9-1"/>
    <property type="organism name" value="human"/>
</dbReference>
<dbReference type="AGR" id="HGNC:13598"/>
<dbReference type="CTD" id="25827"/>
<dbReference type="DisGeNET" id="25827"/>
<dbReference type="GeneCards" id="FBXL2"/>
<dbReference type="HGNC" id="HGNC:13598">
    <property type="gene designation" value="FBXL2"/>
</dbReference>
<dbReference type="HPA" id="ENSG00000153558">
    <property type="expression patterns" value="Tissue enhanced (choroid)"/>
</dbReference>
<dbReference type="MIM" id="605652">
    <property type="type" value="gene"/>
</dbReference>
<dbReference type="neXtProt" id="NX_Q9UKC9"/>
<dbReference type="OpenTargets" id="ENSG00000153558"/>
<dbReference type="PharmGKB" id="PA28021"/>
<dbReference type="VEuPathDB" id="HostDB:ENSG00000153558"/>
<dbReference type="eggNOG" id="KOG4341">
    <property type="taxonomic scope" value="Eukaryota"/>
</dbReference>
<dbReference type="GeneTree" id="ENSGT00940000153845"/>
<dbReference type="HOGENOM" id="CLU_016072_7_1_1"/>
<dbReference type="InParanoid" id="Q9UKC9"/>
<dbReference type="OMA" id="LGCPQME"/>
<dbReference type="OrthoDB" id="550575at2759"/>
<dbReference type="PAN-GO" id="Q9UKC9">
    <property type="GO annotations" value="2 GO annotations based on evolutionary models"/>
</dbReference>
<dbReference type="PhylomeDB" id="Q9UKC9"/>
<dbReference type="TreeFam" id="TF313434"/>
<dbReference type="PathwayCommons" id="Q9UKC9"/>
<dbReference type="SignaLink" id="Q9UKC9"/>
<dbReference type="SIGNOR" id="Q9UKC9"/>
<dbReference type="UniPathway" id="UPA00143"/>
<dbReference type="BioGRID-ORCS" id="25827">
    <property type="hits" value="7 hits in 1188 CRISPR screens"/>
</dbReference>
<dbReference type="ChiTaRS" id="FBXL2">
    <property type="organism name" value="human"/>
</dbReference>
<dbReference type="GeneWiki" id="FBXL2"/>
<dbReference type="GenomeRNAi" id="25827"/>
<dbReference type="Pharos" id="Q9UKC9">
    <property type="development level" value="Tbio"/>
</dbReference>
<dbReference type="PRO" id="PR:Q9UKC9"/>
<dbReference type="Proteomes" id="UP000005640">
    <property type="component" value="Chromosome 3"/>
</dbReference>
<dbReference type="RNAct" id="Q9UKC9">
    <property type="molecule type" value="protein"/>
</dbReference>
<dbReference type="Bgee" id="ENSG00000153558">
    <property type="expression patterns" value="Expressed in orbitofrontal cortex and 165 other cell types or tissues"/>
</dbReference>
<dbReference type="ExpressionAtlas" id="Q9UKC9">
    <property type="expression patterns" value="baseline and differential"/>
</dbReference>
<dbReference type="GO" id="GO:0005737">
    <property type="term" value="C:cytoplasm"/>
    <property type="evidence" value="ECO:0000318"/>
    <property type="project" value="GO_Central"/>
</dbReference>
<dbReference type="GO" id="GO:0016020">
    <property type="term" value="C:membrane"/>
    <property type="evidence" value="ECO:0000314"/>
    <property type="project" value="UniProtKB"/>
</dbReference>
<dbReference type="GO" id="GO:0019005">
    <property type="term" value="C:SCF ubiquitin ligase complex"/>
    <property type="evidence" value="ECO:0000314"/>
    <property type="project" value="UniProtKB"/>
</dbReference>
<dbReference type="GO" id="GO:0005516">
    <property type="term" value="F:calmodulin binding"/>
    <property type="evidence" value="ECO:0007669"/>
    <property type="project" value="UniProtKB-KW"/>
</dbReference>
<dbReference type="GO" id="GO:0036312">
    <property type="term" value="F:phosphatidylinositol 3-kinase regulatory subunit binding"/>
    <property type="evidence" value="ECO:0000353"/>
    <property type="project" value="UniProtKB"/>
</dbReference>
<dbReference type="GO" id="GO:0019903">
    <property type="term" value="F:protein phosphatase binding"/>
    <property type="evidence" value="ECO:0000353"/>
    <property type="project" value="UniProtKB"/>
</dbReference>
<dbReference type="GO" id="GO:1990756">
    <property type="term" value="F:ubiquitin-like ligase-substrate adaptor activity"/>
    <property type="evidence" value="ECO:0000314"/>
    <property type="project" value="UniProtKB"/>
</dbReference>
<dbReference type="GO" id="GO:0044830">
    <property type="term" value="P:modulation by host of viral RNA genome replication"/>
    <property type="evidence" value="ECO:0000315"/>
    <property type="project" value="UniProtKB"/>
</dbReference>
<dbReference type="GO" id="GO:1900226">
    <property type="term" value="P:negative regulation of NLRP3 inflammasome complex assembly"/>
    <property type="evidence" value="ECO:0000314"/>
    <property type="project" value="UniProtKB"/>
</dbReference>
<dbReference type="GO" id="GO:0036211">
    <property type="term" value="P:protein modification process"/>
    <property type="evidence" value="ECO:0000304"/>
    <property type="project" value="ProtInc"/>
</dbReference>
<dbReference type="GO" id="GO:0006513">
    <property type="term" value="P:protein monoubiquitination"/>
    <property type="evidence" value="ECO:0007669"/>
    <property type="project" value="Ensembl"/>
</dbReference>
<dbReference type="GO" id="GO:0016567">
    <property type="term" value="P:protein ubiquitination"/>
    <property type="evidence" value="ECO:0000314"/>
    <property type="project" value="UniProtKB"/>
</dbReference>
<dbReference type="GO" id="GO:0006508">
    <property type="term" value="P:proteolysis"/>
    <property type="evidence" value="ECO:0000304"/>
    <property type="project" value="ProtInc"/>
</dbReference>
<dbReference type="GO" id="GO:0010506">
    <property type="term" value="P:regulation of autophagy"/>
    <property type="evidence" value="ECO:0000315"/>
    <property type="project" value="UniProtKB"/>
</dbReference>
<dbReference type="GO" id="GO:0050727">
    <property type="term" value="P:regulation of inflammatory response"/>
    <property type="evidence" value="ECO:0000250"/>
    <property type="project" value="UniProtKB"/>
</dbReference>
<dbReference type="GO" id="GO:0051896">
    <property type="term" value="P:regulation of phosphatidylinositol 3-kinase/protein kinase B signal transduction"/>
    <property type="evidence" value="ECO:0000314"/>
    <property type="project" value="UniProtKB"/>
</dbReference>
<dbReference type="GO" id="GO:0031146">
    <property type="term" value="P:SCF-dependent proteasomal ubiquitin-dependent protein catabolic process"/>
    <property type="evidence" value="ECO:0000314"/>
    <property type="project" value="UniProtKB"/>
</dbReference>
<dbReference type="CDD" id="cd22115">
    <property type="entry name" value="F-box_FBXL2-like"/>
    <property type="match status" value="1"/>
</dbReference>
<dbReference type="FunFam" id="3.80.10.10:FF:000042">
    <property type="entry name" value="F-box/LRR-repeat protein 20 isoform 2"/>
    <property type="match status" value="1"/>
</dbReference>
<dbReference type="FunFam" id="3.80.10.10:FF:000060">
    <property type="entry name" value="F-box/LRR-repeat protein 20 isoform 2"/>
    <property type="match status" value="1"/>
</dbReference>
<dbReference type="FunFam" id="1.20.1280.50:FF:000013">
    <property type="entry name" value="F-box/LRR-repeat protein 20 isoform X1"/>
    <property type="match status" value="1"/>
</dbReference>
<dbReference type="Gene3D" id="1.20.1280.50">
    <property type="match status" value="1"/>
</dbReference>
<dbReference type="Gene3D" id="3.80.10.10">
    <property type="entry name" value="Ribonuclease Inhibitor"/>
    <property type="match status" value="2"/>
</dbReference>
<dbReference type="InterPro" id="IPR001810">
    <property type="entry name" value="F-box_dom"/>
</dbReference>
<dbReference type="InterPro" id="IPR050648">
    <property type="entry name" value="F-box_LRR-repeat"/>
</dbReference>
<dbReference type="InterPro" id="IPR001611">
    <property type="entry name" value="Leu-rich_rpt"/>
</dbReference>
<dbReference type="InterPro" id="IPR006553">
    <property type="entry name" value="Leu-rich_rpt_Cys-con_subtyp"/>
</dbReference>
<dbReference type="InterPro" id="IPR032675">
    <property type="entry name" value="LRR_dom_sf"/>
</dbReference>
<dbReference type="PANTHER" id="PTHR13382:SF40">
    <property type="entry name" value="F-BOX_LRR-REPEAT PROTEIN 2"/>
    <property type="match status" value="1"/>
</dbReference>
<dbReference type="PANTHER" id="PTHR13382">
    <property type="entry name" value="MITOCHONDRIAL ATP SYNTHASE COUPLING FACTOR B"/>
    <property type="match status" value="1"/>
</dbReference>
<dbReference type="Pfam" id="PF12937">
    <property type="entry name" value="F-box-like"/>
    <property type="match status" value="1"/>
</dbReference>
<dbReference type="Pfam" id="PF13516">
    <property type="entry name" value="LRR_6"/>
    <property type="match status" value="5"/>
</dbReference>
<dbReference type="SMART" id="SM00256">
    <property type="entry name" value="FBOX"/>
    <property type="match status" value="1"/>
</dbReference>
<dbReference type="SMART" id="SM00367">
    <property type="entry name" value="LRR_CC"/>
    <property type="match status" value="11"/>
</dbReference>
<dbReference type="SUPFAM" id="SSF52047">
    <property type="entry name" value="RNI-like"/>
    <property type="match status" value="1"/>
</dbReference>
<dbReference type="PROSITE" id="PS50181">
    <property type="entry name" value="FBOX"/>
    <property type="match status" value="1"/>
</dbReference>
<accession>Q9UKC9</accession>
<accession>B4DQV0</accession>
<accession>E9PD06</accession>
<accession>Q6IAN3</accession>
<accession>Q9NVQ8</accession>
<accession>Q9UK27</accession>
<accession>Q9UKA5</accession>
<accession>Q9Y3Y9</accession>
<sequence length="423" mass="47062">MVFSNNDEGLINKKLPKELLLRIFSFLDIVTLCRCAQISKAWNILALDGSNWQRIDLFNFQTDVEGRVVENISKRCGGFLRKLSLRGCIGVGDSSLKTFAQNCRNIEHLNLNGCTKITDSTCYSLSRFCSKLKHLDLTSCVSITNSSLKGISEGCRNLEYLNLSWCDQITKDGIEALVRGCRGLKALLLRGCTQLEDEALKHIQNYCHELVSLNLQSCSRITDEGVVQICRGCHRLQALCLSGCSNLTDASLTALGLNCPRLQILEAARCSHLTDAGFTLLARNCHELEKMDLEECILITDSTLIQLSIHCPKLQALSLSHCELITDDGILHLSNSTCGHERLRVLELDNCLLITDVALEHLENCRGLERLELYDCQQVTRAGIKRMRAQLPHVKVHAYFAPVTPPTAVAGSGQRLCRCCVIL</sequence>